<feature type="chain" id="PRO_0000131762" description="Protein translocase subunit SecY">
    <location>
        <begin position="1"/>
        <end position="491"/>
    </location>
</feature>
<feature type="topological domain" description="Cytoplasmic" evidence="1">
    <location>
        <begin position="1"/>
        <end position="20"/>
    </location>
</feature>
<feature type="transmembrane region" description="Helical; Name=Helix 1" evidence="2">
    <location>
        <begin position="21"/>
        <end position="47"/>
    </location>
</feature>
<feature type="topological domain" description="Extracellular" evidence="1">
    <location>
        <begin position="48"/>
        <end position="58"/>
    </location>
</feature>
<feature type="transmembrane region" description="Discontinuously helical; Name=Helix 2" evidence="1">
    <location>
        <begin position="59"/>
        <end position="87"/>
    </location>
</feature>
<feature type="intramembrane region" description="Helical; Name=Helix 2A" evidence="1">
    <location>
        <begin position="59"/>
        <end position="66"/>
    </location>
</feature>
<feature type="intramembrane region" evidence="1">
    <location>
        <begin position="67"/>
        <end position="78"/>
    </location>
</feature>
<feature type="intramembrane region" description="Helical; Name=Helix 2B" evidence="1">
    <location>
        <begin position="79"/>
        <end position="87"/>
    </location>
</feature>
<feature type="topological domain" description="Cytoplasmic" evidence="1">
    <location>
        <begin position="88"/>
        <end position="109"/>
    </location>
</feature>
<feature type="transmembrane region" description="Helical; Name=Helix 3" evidence="2">
    <location>
        <begin position="110"/>
        <end position="134"/>
    </location>
</feature>
<feature type="topological domain" description="Extracellular" evidence="1">
    <location>
        <begin position="135"/>
        <end position="152"/>
    </location>
</feature>
<feature type="transmembrane region" description="Helical; Name=Helix 4" evidence="2">
    <location>
        <begin position="153"/>
        <end position="177"/>
    </location>
</feature>
<feature type="topological domain" description="Cytoplasmic" evidence="1">
    <location>
        <begin position="178"/>
        <end position="183"/>
    </location>
</feature>
<feature type="transmembrane region" description="Helical; Name=Helix 5" evidence="2">
    <location>
        <begin position="184"/>
        <end position="202"/>
    </location>
</feature>
<feature type="topological domain" description="Extracellular" evidence="1">
    <location>
        <begin position="203"/>
        <end position="244"/>
    </location>
</feature>
<feature type="transmembrane region" description="Helical; Name=Helix 6" evidence="2">
    <location>
        <begin position="245"/>
        <end position="266"/>
    </location>
</feature>
<feature type="topological domain" description="Cytoplasmic" evidence="1">
    <location>
        <begin position="267"/>
        <end position="291"/>
    </location>
</feature>
<feature type="transmembrane region" description="Helical; Name=Helix 7" evidence="2">
    <location>
        <begin position="292"/>
        <end position="313"/>
    </location>
</feature>
<feature type="topological domain" description="Extracellular" evidence="1">
    <location>
        <begin position="314"/>
        <end position="365"/>
    </location>
</feature>
<feature type="transmembrane region" description="Helical; Name=Helix 8" evidence="2">
    <location>
        <begin position="366"/>
        <end position="385"/>
    </location>
</feature>
<feature type="topological domain" description="Cytoplasmic" evidence="1">
    <location>
        <begin position="386"/>
        <end position="428"/>
    </location>
</feature>
<feature type="transmembrane region" description="Helical; Name=Helix 9" evidence="2">
    <location>
        <begin position="429"/>
        <end position="447"/>
    </location>
</feature>
<feature type="topological domain" description="Extracellular" evidence="1">
    <location>
        <begin position="448"/>
        <end position="452"/>
    </location>
</feature>
<feature type="transmembrane region" description="Helical; Name=Helix 10" evidence="2">
    <location>
        <begin position="453"/>
        <end position="467"/>
    </location>
</feature>
<feature type="topological domain" description="Cytoplasmic" evidence="1">
    <location>
        <begin position="468"/>
        <end position="491"/>
    </location>
</feature>
<proteinExistence type="inferred from homology"/>
<keyword id="KW-1003">Cell membrane</keyword>
<keyword id="KW-0472">Membrane</keyword>
<keyword id="KW-0653">Protein transport</keyword>
<keyword id="KW-1185">Reference proteome</keyword>
<keyword id="KW-0811">Translocation</keyword>
<keyword id="KW-0812">Transmembrane</keyword>
<keyword id="KW-1133">Transmembrane helix</keyword>
<keyword id="KW-0813">Transport</keyword>
<sequence length="491" mass="52819">MGWKEAAAPVLTRMPAVERPEGHVPFRRKMYWTGGVLVLYFFLTNVPLWGIQTAGNDFFGQFRSLLAGGQGTVLQLGIGPIVTASIVLQLLGGANLLGLDTDNDPRDQAIYQGLQKFLVGVMVVLTGAPMVFLGNFLQPSQQLAQSMPGGAFGVEVLIFAQIAAGGILLLFMDEVISKWGVGSGIGLFIVAGVSQSLVGGLVFWEGGVGSQGLLPTWFDIIVGNVSNMPPLLSGSGIEFLLMQAGILGLLTTLFIYVVVVYAESVRVEIPLSHARVKGARGRFPVKLIYASVLPMILVRALQANIQFLGQILNSTLASMPTWLGVYGGNGQVTGGLFYYLAPIYSPNAWMWWTSGATAARWQVLIRIAIDLSFMIIGGAIFAIFWVETADMGPDATARQIQNSGMQIPGFRKNQGVIEKVMERYIPQVTVIGGALVGLLAVMANMLGTIGNVSGTGLLLTISITYKLYEEIAEEQMMEMHPMMREMFGGGD</sequence>
<accession>Q9HPB1</accession>
<gene>
    <name evidence="2" type="primary">secY</name>
    <name type="ordered locus">VNG_1719G</name>
</gene>
<protein>
    <recommendedName>
        <fullName evidence="2">Protein translocase subunit SecY</fullName>
    </recommendedName>
    <alternativeName>
        <fullName evidence="2">Protein transport protein SEC61 subunit alpha homolog</fullName>
    </alternativeName>
</protein>
<reference key="1">
    <citation type="journal article" date="2000" name="Proc. Natl. Acad. Sci. U.S.A.">
        <title>Genome sequence of Halobacterium species NRC-1.</title>
        <authorList>
            <person name="Ng W.V."/>
            <person name="Kennedy S.P."/>
            <person name="Mahairas G.G."/>
            <person name="Berquist B."/>
            <person name="Pan M."/>
            <person name="Shukla H.D."/>
            <person name="Lasky S.R."/>
            <person name="Baliga N.S."/>
            <person name="Thorsson V."/>
            <person name="Sbrogna J."/>
            <person name="Swartzell S."/>
            <person name="Weir D."/>
            <person name="Hall J."/>
            <person name="Dahl T.A."/>
            <person name="Welti R."/>
            <person name="Goo Y.A."/>
            <person name="Leithauser B."/>
            <person name="Keller K."/>
            <person name="Cruz R."/>
            <person name="Danson M.J."/>
            <person name="Hough D.W."/>
            <person name="Maddocks D.G."/>
            <person name="Jablonski P.E."/>
            <person name="Krebs M.P."/>
            <person name="Angevine C.M."/>
            <person name="Dale H."/>
            <person name="Isenbarger T.A."/>
            <person name="Peck R.F."/>
            <person name="Pohlschroder M."/>
            <person name="Spudich J.L."/>
            <person name="Jung K.-H."/>
            <person name="Alam M."/>
            <person name="Freitas T."/>
            <person name="Hou S."/>
            <person name="Daniels C.J."/>
            <person name="Dennis P.P."/>
            <person name="Omer A.D."/>
            <person name="Ebhardt H."/>
            <person name="Lowe T.M."/>
            <person name="Liang P."/>
            <person name="Riley M."/>
            <person name="Hood L."/>
            <person name="DasSarma S."/>
        </authorList>
    </citation>
    <scope>NUCLEOTIDE SEQUENCE [LARGE SCALE GENOMIC DNA]</scope>
    <source>
        <strain>ATCC 700922 / JCM 11081 / NRC-1</strain>
    </source>
</reference>
<comment type="function">
    <text evidence="2">The central subunit of the protein translocation channel SecYEG. Consists of two halves formed by TMs 1-5 and 6-10. These two domains form a lateral gate at the front which open onto the bilayer between TMs 2 and 7, and are clamped together by SecE at the back. The channel is closed by both a pore ring composed of hydrophobic SecY resides and a short helix (helix 2A) on the extracellular side of the membrane which forms a plug. The plug probably moves laterally to allow the channel to open. The ring and the pore may move independently.</text>
</comment>
<comment type="subunit">
    <text evidence="2">Component of the Sec protein translocase complex. Heterotrimer consisting of alpha (SecY), beta (SecG) and gamma (SecE) subunits. The heterotrimers can form oligomers, although 1 heterotrimer is thought to be able to translocate proteins. Interacts with the ribosome. May interact with SecDF, and other proteins may be involved.</text>
</comment>
<comment type="subcellular location">
    <subcellularLocation>
        <location evidence="2">Cell membrane</location>
        <topology evidence="2">Multi-pass membrane protein</topology>
    </subcellularLocation>
</comment>
<comment type="similarity">
    <text evidence="2">Belongs to the SecY/SEC61-alpha family.</text>
</comment>
<name>SECY_HALSA</name>
<evidence type="ECO:0000250" key="1"/>
<evidence type="ECO:0000255" key="2">
    <source>
        <dbReference type="HAMAP-Rule" id="MF_01465"/>
    </source>
</evidence>
<dbReference type="EMBL" id="AE004437">
    <property type="protein sequence ID" value="AAG19959.1"/>
    <property type="molecule type" value="Genomic_DNA"/>
</dbReference>
<dbReference type="PIR" id="C84324">
    <property type="entry name" value="C84324"/>
</dbReference>
<dbReference type="RefSeq" id="WP_010903257.1">
    <property type="nucleotide sequence ID" value="NC_002607.1"/>
</dbReference>
<dbReference type="SMR" id="Q9HPB1"/>
<dbReference type="FunCoup" id="Q9HPB1">
    <property type="interactions" value="169"/>
</dbReference>
<dbReference type="STRING" id="64091.VNG_1719G"/>
<dbReference type="PaxDb" id="64091-VNG_1719G"/>
<dbReference type="GeneID" id="68694374"/>
<dbReference type="KEGG" id="hal:VNG_1719G"/>
<dbReference type="PATRIC" id="fig|64091.14.peg.1311"/>
<dbReference type="HOGENOM" id="CLU_031763_3_0_2"/>
<dbReference type="InParanoid" id="Q9HPB1"/>
<dbReference type="OrthoDB" id="371914at2157"/>
<dbReference type="PhylomeDB" id="Q9HPB1"/>
<dbReference type="Proteomes" id="UP000000554">
    <property type="component" value="Chromosome"/>
</dbReference>
<dbReference type="GO" id="GO:0005886">
    <property type="term" value="C:plasma membrane"/>
    <property type="evidence" value="ECO:0007669"/>
    <property type="project" value="UniProtKB-SubCell"/>
</dbReference>
<dbReference type="GO" id="GO:0008320">
    <property type="term" value="F:protein transmembrane transporter activity"/>
    <property type="evidence" value="ECO:0000318"/>
    <property type="project" value="GO_Central"/>
</dbReference>
<dbReference type="GO" id="GO:0005048">
    <property type="term" value="F:signal sequence binding"/>
    <property type="evidence" value="ECO:0000318"/>
    <property type="project" value="GO_Central"/>
</dbReference>
<dbReference type="GO" id="GO:0006616">
    <property type="term" value="P:SRP-dependent cotranslational protein targeting to membrane, translocation"/>
    <property type="evidence" value="ECO:0000318"/>
    <property type="project" value="GO_Central"/>
</dbReference>
<dbReference type="FunFam" id="1.10.3370.10:FF:000013">
    <property type="entry name" value="Protein translocase subunit SecY"/>
    <property type="match status" value="1"/>
</dbReference>
<dbReference type="Gene3D" id="1.10.3370.10">
    <property type="entry name" value="SecY subunit domain"/>
    <property type="match status" value="1"/>
</dbReference>
<dbReference type="HAMAP" id="MF_01465">
    <property type="entry name" value="SecY"/>
    <property type="match status" value="1"/>
</dbReference>
<dbReference type="InterPro" id="IPR026593">
    <property type="entry name" value="SecY"/>
</dbReference>
<dbReference type="InterPro" id="IPR002208">
    <property type="entry name" value="SecY/SEC61-alpha"/>
</dbReference>
<dbReference type="InterPro" id="IPR030659">
    <property type="entry name" value="SecY_CS"/>
</dbReference>
<dbReference type="InterPro" id="IPR023201">
    <property type="entry name" value="SecY_dom_sf"/>
</dbReference>
<dbReference type="InterPro" id="IPR019561">
    <property type="entry name" value="Translocon_Sec61/SecY_plug_dom"/>
</dbReference>
<dbReference type="NCBIfam" id="TIGR00967">
    <property type="entry name" value="3a0501s007"/>
    <property type="match status" value="1"/>
</dbReference>
<dbReference type="NCBIfam" id="NF006341">
    <property type="entry name" value="PRK08568.1-5"/>
    <property type="match status" value="1"/>
</dbReference>
<dbReference type="PANTHER" id="PTHR10906">
    <property type="entry name" value="SECY/SEC61-ALPHA FAMILY MEMBER"/>
    <property type="match status" value="1"/>
</dbReference>
<dbReference type="Pfam" id="PF10559">
    <property type="entry name" value="Plug_translocon"/>
    <property type="match status" value="1"/>
</dbReference>
<dbReference type="Pfam" id="PF00344">
    <property type="entry name" value="SecY"/>
    <property type="match status" value="1"/>
</dbReference>
<dbReference type="PIRSF" id="PIRSF004557">
    <property type="entry name" value="SecY"/>
    <property type="match status" value="1"/>
</dbReference>
<dbReference type="SUPFAM" id="SSF103491">
    <property type="entry name" value="Preprotein translocase SecY subunit"/>
    <property type="match status" value="1"/>
</dbReference>
<dbReference type="PROSITE" id="PS00755">
    <property type="entry name" value="SECY_1"/>
    <property type="match status" value="1"/>
</dbReference>
<dbReference type="PROSITE" id="PS00756">
    <property type="entry name" value="SECY_2"/>
    <property type="match status" value="1"/>
</dbReference>
<organism>
    <name type="scientific">Halobacterium salinarum (strain ATCC 700922 / JCM 11081 / NRC-1)</name>
    <name type="common">Halobacterium halobium</name>
    <dbReference type="NCBI Taxonomy" id="64091"/>
    <lineage>
        <taxon>Archaea</taxon>
        <taxon>Methanobacteriati</taxon>
        <taxon>Methanobacteriota</taxon>
        <taxon>Stenosarchaea group</taxon>
        <taxon>Halobacteria</taxon>
        <taxon>Halobacteriales</taxon>
        <taxon>Halobacteriaceae</taxon>
        <taxon>Halobacterium</taxon>
        <taxon>Halobacterium salinarum NRC-34001</taxon>
    </lineage>
</organism>